<name>CLPX_RICRO</name>
<accession>B0BUW3</accession>
<dbReference type="EMBL" id="CP000766">
    <property type="protein sequence ID" value="ABY73023.1"/>
    <property type="molecule type" value="Genomic_DNA"/>
</dbReference>
<dbReference type="RefSeq" id="WP_012151203.1">
    <property type="nucleotide sequence ID" value="NC_010263.3"/>
</dbReference>
<dbReference type="SMR" id="B0BUW3"/>
<dbReference type="GeneID" id="79937718"/>
<dbReference type="KEGG" id="rrj:RrIowa_1272"/>
<dbReference type="eggNOG" id="COG1219">
    <property type="taxonomic scope" value="Bacteria"/>
</dbReference>
<dbReference type="HOGENOM" id="CLU_014218_8_2_5"/>
<dbReference type="Proteomes" id="UP000000796">
    <property type="component" value="Chromosome"/>
</dbReference>
<dbReference type="GO" id="GO:0009376">
    <property type="term" value="C:HslUV protease complex"/>
    <property type="evidence" value="ECO:0007669"/>
    <property type="project" value="TreeGrafter"/>
</dbReference>
<dbReference type="GO" id="GO:0005524">
    <property type="term" value="F:ATP binding"/>
    <property type="evidence" value="ECO:0007669"/>
    <property type="project" value="UniProtKB-UniRule"/>
</dbReference>
<dbReference type="GO" id="GO:0016887">
    <property type="term" value="F:ATP hydrolysis activity"/>
    <property type="evidence" value="ECO:0007669"/>
    <property type="project" value="InterPro"/>
</dbReference>
<dbReference type="GO" id="GO:0140662">
    <property type="term" value="F:ATP-dependent protein folding chaperone"/>
    <property type="evidence" value="ECO:0007669"/>
    <property type="project" value="InterPro"/>
</dbReference>
<dbReference type="GO" id="GO:0046983">
    <property type="term" value="F:protein dimerization activity"/>
    <property type="evidence" value="ECO:0007669"/>
    <property type="project" value="InterPro"/>
</dbReference>
<dbReference type="GO" id="GO:0051082">
    <property type="term" value="F:unfolded protein binding"/>
    <property type="evidence" value="ECO:0007669"/>
    <property type="project" value="UniProtKB-UniRule"/>
</dbReference>
<dbReference type="GO" id="GO:0008270">
    <property type="term" value="F:zinc ion binding"/>
    <property type="evidence" value="ECO:0007669"/>
    <property type="project" value="InterPro"/>
</dbReference>
<dbReference type="GO" id="GO:0051301">
    <property type="term" value="P:cell division"/>
    <property type="evidence" value="ECO:0007669"/>
    <property type="project" value="TreeGrafter"/>
</dbReference>
<dbReference type="GO" id="GO:0051603">
    <property type="term" value="P:proteolysis involved in protein catabolic process"/>
    <property type="evidence" value="ECO:0007669"/>
    <property type="project" value="TreeGrafter"/>
</dbReference>
<dbReference type="CDD" id="cd19497">
    <property type="entry name" value="RecA-like_ClpX"/>
    <property type="match status" value="1"/>
</dbReference>
<dbReference type="FunFam" id="1.10.8.60:FF:000002">
    <property type="entry name" value="ATP-dependent Clp protease ATP-binding subunit ClpX"/>
    <property type="match status" value="1"/>
</dbReference>
<dbReference type="FunFam" id="3.40.50.300:FF:000005">
    <property type="entry name" value="ATP-dependent Clp protease ATP-binding subunit ClpX"/>
    <property type="match status" value="1"/>
</dbReference>
<dbReference type="Gene3D" id="1.10.8.60">
    <property type="match status" value="1"/>
</dbReference>
<dbReference type="Gene3D" id="6.20.220.10">
    <property type="entry name" value="ClpX chaperone, C4-type zinc finger domain"/>
    <property type="match status" value="1"/>
</dbReference>
<dbReference type="Gene3D" id="3.40.50.300">
    <property type="entry name" value="P-loop containing nucleotide triphosphate hydrolases"/>
    <property type="match status" value="1"/>
</dbReference>
<dbReference type="HAMAP" id="MF_00175">
    <property type="entry name" value="ClpX"/>
    <property type="match status" value="1"/>
</dbReference>
<dbReference type="InterPro" id="IPR003593">
    <property type="entry name" value="AAA+_ATPase"/>
</dbReference>
<dbReference type="InterPro" id="IPR050052">
    <property type="entry name" value="ATP-dep_Clp_protease_ClpX"/>
</dbReference>
<dbReference type="InterPro" id="IPR003959">
    <property type="entry name" value="ATPase_AAA_core"/>
</dbReference>
<dbReference type="InterPro" id="IPR019489">
    <property type="entry name" value="Clp_ATPase_C"/>
</dbReference>
<dbReference type="InterPro" id="IPR004487">
    <property type="entry name" value="Clp_protease_ATP-bd_su_ClpX"/>
</dbReference>
<dbReference type="InterPro" id="IPR046425">
    <property type="entry name" value="ClpX_bact"/>
</dbReference>
<dbReference type="InterPro" id="IPR027417">
    <property type="entry name" value="P-loop_NTPase"/>
</dbReference>
<dbReference type="InterPro" id="IPR010603">
    <property type="entry name" value="Znf_CppX_C4"/>
</dbReference>
<dbReference type="InterPro" id="IPR038366">
    <property type="entry name" value="Znf_CppX_C4_sf"/>
</dbReference>
<dbReference type="NCBIfam" id="TIGR00382">
    <property type="entry name" value="clpX"/>
    <property type="match status" value="1"/>
</dbReference>
<dbReference type="NCBIfam" id="NF003745">
    <property type="entry name" value="PRK05342.1"/>
    <property type="match status" value="1"/>
</dbReference>
<dbReference type="PANTHER" id="PTHR48102:SF7">
    <property type="entry name" value="ATP-DEPENDENT CLP PROTEASE ATP-BINDING SUBUNIT CLPX-LIKE, MITOCHONDRIAL"/>
    <property type="match status" value="1"/>
</dbReference>
<dbReference type="PANTHER" id="PTHR48102">
    <property type="entry name" value="ATP-DEPENDENT CLP PROTEASE ATP-BINDING SUBUNIT CLPX-LIKE, MITOCHONDRIAL-RELATED"/>
    <property type="match status" value="1"/>
</dbReference>
<dbReference type="Pfam" id="PF07724">
    <property type="entry name" value="AAA_2"/>
    <property type="match status" value="1"/>
</dbReference>
<dbReference type="Pfam" id="PF10431">
    <property type="entry name" value="ClpB_D2-small"/>
    <property type="match status" value="1"/>
</dbReference>
<dbReference type="Pfam" id="PF06689">
    <property type="entry name" value="zf-C4_ClpX"/>
    <property type="match status" value="1"/>
</dbReference>
<dbReference type="SMART" id="SM00382">
    <property type="entry name" value="AAA"/>
    <property type="match status" value="1"/>
</dbReference>
<dbReference type="SMART" id="SM01086">
    <property type="entry name" value="ClpB_D2-small"/>
    <property type="match status" value="1"/>
</dbReference>
<dbReference type="SMART" id="SM00994">
    <property type="entry name" value="zf-C4_ClpX"/>
    <property type="match status" value="1"/>
</dbReference>
<dbReference type="SUPFAM" id="SSF57716">
    <property type="entry name" value="Glucocorticoid receptor-like (DNA-binding domain)"/>
    <property type="match status" value="1"/>
</dbReference>
<dbReference type="SUPFAM" id="SSF52540">
    <property type="entry name" value="P-loop containing nucleoside triphosphate hydrolases"/>
    <property type="match status" value="1"/>
</dbReference>
<dbReference type="PROSITE" id="PS51902">
    <property type="entry name" value="CLPX_ZB"/>
    <property type="match status" value="1"/>
</dbReference>
<proteinExistence type="inferred from homology"/>
<feature type="chain" id="PRO_1000077170" description="ATP-dependent Clp protease ATP-binding subunit ClpX">
    <location>
        <begin position="1"/>
        <end position="425"/>
    </location>
</feature>
<feature type="domain" description="ClpX-type ZB" evidence="2">
    <location>
        <begin position="1"/>
        <end position="53"/>
    </location>
</feature>
<feature type="binding site" evidence="2">
    <location>
        <position position="12"/>
    </location>
    <ligand>
        <name>Zn(2+)</name>
        <dbReference type="ChEBI" id="CHEBI:29105"/>
    </ligand>
</feature>
<feature type="binding site" evidence="2">
    <location>
        <position position="15"/>
    </location>
    <ligand>
        <name>Zn(2+)</name>
        <dbReference type="ChEBI" id="CHEBI:29105"/>
    </ligand>
</feature>
<feature type="binding site" evidence="2">
    <location>
        <position position="34"/>
    </location>
    <ligand>
        <name>Zn(2+)</name>
        <dbReference type="ChEBI" id="CHEBI:29105"/>
    </ligand>
</feature>
<feature type="binding site" evidence="2">
    <location>
        <position position="37"/>
    </location>
    <ligand>
        <name>Zn(2+)</name>
        <dbReference type="ChEBI" id="CHEBI:29105"/>
    </ligand>
</feature>
<feature type="binding site" evidence="1">
    <location>
        <begin position="117"/>
        <end position="124"/>
    </location>
    <ligand>
        <name>ATP</name>
        <dbReference type="ChEBI" id="CHEBI:30616"/>
    </ligand>
</feature>
<sequence length="425" mass="46576">MVVEADKKALICSFCSKKQHEVKKLIAGPAVFICDECIDLCTDIMKEENKVALKQITSSIPTPQKICGILNDYVVGQDQAKKILAVAVYNHYKRLEYIQSGNNDVELNKSNILLIGPTGSGKTVLAQTLAKILDVPFTMADATSLTEAGYVGEDVENILLRLLIASEFNIAKAQKGIIYIDEVDKIARKSENPSITRDVSGEGVQQALLKIMEGTVASVPPQGGRKHPQQDFVQLDTSNILFICGGAFMGIDSIITSRTNHSSIGFAANVNIDKEKNNSEILKSLEIEDLTKFGLIPEFIGRLPIVTTLDELDKEALITILTKPKNAIVKQYQKQFELDDAELVIDDSALETIAEKALAKKTGARGLRSILEHLLLDSMYKVAELKKQRVTITKEVVNGLVEPIMTSLISTKSNKKQPIIADIPA</sequence>
<comment type="function">
    <text evidence="1">ATP-dependent specificity component of the Clp protease. It directs the protease to specific substrates. Can perform chaperone functions in the absence of ClpP.</text>
</comment>
<comment type="subunit">
    <text evidence="1">Component of the ClpX-ClpP complex. Forms a hexameric ring that, in the presence of ATP, binds to fourteen ClpP subunits assembled into a disk-like structure with a central cavity, resembling the structure of eukaryotic proteasomes.</text>
</comment>
<comment type="similarity">
    <text evidence="1">Belongs to the ClpX chaperone family.</text>
</comment>
<reference key="1">
    <citation type="journal article" date="2008" name="Infect. Immun.">
        <title>Genomic comparison of virulent Rickettsia rickettsii Sheila Smith and avirulent Rickettsia rickettsii Iowa.</title>
        <authorList>
            <person name="Ellison D.W."/>
            <person name="Clark T.R."/>
            <person name="Sturdevant D.E."/>
            <person name="Virtaneva K."/>
            <person name="Porcella S.F."/>
            <person name="Hackstadt T."/>
        </authorList>
    </citation>
    <scope>NUCLEOTIDE SEQUENCE [LARGE SCALE GENOMIC DNA]</scope>
    <source>
        <strain>Iowa</strain>
    </source>
</reference>
<evidence type="ECO:0000255" key="1">
    <source>
        <dbReference type="HAMAP-Rule" id="MF_00175"/>
    </source>
</evidence>
<evidence type="ECO:0000255" key="2">
    <source>
        <dbReference type="PROSITE-ProRule" id="PRU01250"/>
    </source>
</evidence>
<keyword id="KW-0067">ATP-binding</keyword>
<keyword id="KW-0143">Chaperone</keyword>
<keyword id="KW-0479">Metal-binding</keyword>
<keyword id="KW-0547">Nucleotide-binding</keyword>
<keyword id="KW-0862">Zinc</keyword>
<protein>
    <recommendedName>
        <fullName evidence="1">ATP-dependent Clp protease ATP-binding subunit ClpX</fullName>
    </recommendedName>
</protein>
<gene>
    <name evidence="1" type="primary">clpX</name>
    <name type="ordered locus">RrIowa_1272</name>
</gene>
<organism>
    <name type="scientific">Rickettsia rickettsii (strain Iowa)</name>
    <dbReference type="NCBI Taxonomy" id="452659"/>
    <lineage>
        <taxon>Bacteria</taxon>
        <taxon>Pseudomonadati</taxon>
        <taxon>Pseudomonadota</taxon>
        <taxon>Alphaproteobacteria</taxon>
        <taxon>Rickettsiales</taxon>
        <taxon>Rickettsiaceae</taxon>
        <taxon>Rickettsieae</taxon>
        <taxon>Rickettsia</taxon>
        <taxon>spotted fever group</taxon>
    </lineage>
</organism>